<keyword id="KW-1003">Cell membrane</keyword>
<keyword id="KW-0472">Membrane</keyword>
<keyword id="KW-0812">Transmembrane</keyword>
<keyword id="KW-1133">Transmembrane helix</keyword>
<dbReference type="EMBL" id="AM408590">
    <property type="protein sequence ID" value="CAL72654.1"/>
    <property type="molecule type" value="Genomic_DNA"/>
</dbReference>
<dbReference type="RefSeq" id="WP_003413663.1">
    <property type="nucleotide sequence ID" value="NC_008769.1"/>
</dbReference>
<dbReference type="KEGG" id="mbb:BCG_2666c"/>
<dbReference type="HOGENOM" id="CLU_117653_0_1_11"/>
<dbReference type="Proteomes" id="UP000001472">
    <property type="component" value="Chromosome"/>
</dbReference>
<dbReference type="GO" id="GO:0005886">
    <property type="term" value="C:plasma membrane"/>
    <property type="evidence" value="ECO:0007669"/>
    <property type="project" value="UniProtKB-SubCell"/>
</dbReference>
<dbReference type="HAMAP" id="MF_00010">
    <property type="entry name" value="UPF0060"/>
    <property type="match status" value="1"/>
</dbReference>
<dbReference type="InterPro" id="IPR003844">
    <property type="entry name" value="UPF0060"/>
</dbReference>
<dbReference type="NCBIfam" id="NF002586">
    <property type="entry name" value="PRK02237.1"/>
    <property type="match status" value="1"/>
</dbReference>
<dbReference type="PANTHER" id="PTHR36116">
    <property type="entry name" value="UPF0060 MEMBRANE PROTEIN YNFA"/>
    <property type="match status" value="1"/>
</dbReference>
<dbReference type="PANTHER" id="PTHR36116:SF1">
    <property type="entry name" value="UPF0060 MEMBRANE PROTEIN YNFA"/>
    <property type="match status" value="1"/>
</dbReference>
<dbReference type="Pfam" id="PF02694">
    <property type="entry name" value="UPF0060"/>
    <property type="match status" value="1"/>
</dbReference>
<dbReference type="SUPFAM" id="SSF103481">
    <property type="entry name" value="Multidrug resistance efflux transporter EmrE"/>
    <property type="match status" value="1"/>
</dbReference>
<proteinExistence type="inferred from homology"/>
<gene>
    <name type="ordered locus">BCG_2666c</name>
</gene>
<feature type="chain" id="PRO_1000000762" description="UPF0060 membrane protein BCG_2666c">
    <location>
        <begin position="1"/>
        <end position="110"/>
    </location>
</feature>
<feature type="transmembrane region" description="Helical" evidence="1">
    <location>
        <begin position="6"/>
        <end position="26"/>
    </location>
</feature>
<feature type="transmembrane region" description="Helical" evidence="1">
    <location>
        <begin position="32"/>
        <end position="52"/>
    </location>
</feature>
<feature type="transmembrane region" description="Helical" evidence="1">
    <location>
        <begin position="61"/>
        <end position="81"/>
    </location>
</feature>
<feature type="transmembrane region" description="Helical" evidence="1">
    <location>
        <begin position="90"/>
        <end position="110"/>
    </location>
</feature>
<protein>
    <recommendedName>
        <fullName evidence="1">UPF0060 membrane protein BCG_2666c</fullName>
    </recommendedName>
</protein>
<reference key="1">
    <citation type="journal article" date="2007" name="Proc. Natl. Acad. Sci. U.S.A.">
        <title>Genome plasticity of BCG and impact on vaccine efficacy.</title>
        <authorList>
            <person name="Brosch R."/>
            <person name="Gordon S.V."/>
            <person name="Garnier T."/>
            <person name="Eiglmeier K."/>
            <person name="Frigui W."/>
            <person name="Valenti P."/>
            <person name="Dos Santos S."/>
            <person name="Duthoy S."/>
            <person name="Lacroix C."/>
            <person name="Garcia-Pelayo C."/>
            <person name="Inwald J.K."/>
            <person name="Golby P."/>
            <person name="Garcia J.N."/>
            <person name="Hewinson R.G."/>
            <person name="Behr M.A."/>
            <person name="Quail M.A."/>
            <person name="Churcher C."/>
            <person name="Barrell B.G."/>
            <person name="Parkhill J."/>
            <person name="Cole S.T."/>
        </authorList>
    </citation>
    <scope>NUCLEOTIDE SEQUENCE [LARGE SCALE GENOMIC DNA]</scope>
    <source>
        <strain>BCG / Pasteur 1173P2</strain>
    </source>
</reference>
<comment type="subcellular location">
    <subcellularLocation>
        <location evidence="1">Cell membrane</location>
        <topology evidence="1">Multi-pass membrane protein</topology>
    </subcellularLocation>
</comment>
<comment type="similarity">
    <text evidence="1">Belongs to the UPF0060 family.</text>
</comment>
<name>Y2666_MYCBP</name>
<organism>
    <name type="scientific">Mycobacterium bovis (strain BCG / Pasteur 1173P2)</name>
    <dbReference type="NCBI Taxonomy" id="410289"/>
    <lineage>
        <taxon>Bacteria</taxon>
        <taxon>Bacillati</taxon>
        <taxon>Actinomycetota</taxon>
        <taxon>Actinomycetes</taxon>
        <taxon>Mycobacteriales</taxon>
        <taxon>Mycobacteriaceae</taxon>
        <taxon>Mycobacterium</taxon>
        <taxon>Mycobacterium tuberculosis complex</taxon>
    </lineage>
</organism>
<accession>A1KLZ1</accession>
<evidence type="ECO:0000255" key="1">
    <source>
        <dbReference type="HAMAP-Rule" id="MF_00010"/>
    </source>
</evidence>
<sequence>MVVRSILLFVLAAVAEIGGAWLVWQGVREQRGWLWAGLGVIALGVYGFFATLQPDAHFGRVLAAYGGVFVAGSLAWGMALDGFRPDRWDVIGALGCMAGVAVIMYAPRGH</sequence>